<name>CYOE_ECOHS</name>
<keyword id="KW-0997">Cell inner membrane</keyword>
<keyword id="KW-1003">Cell membrane</keyword>
<keyword id="KW-0350">Heme biosynthesis</keyword>
<keyword id="KW-0472">Membrane</keyword>
<keyword id="KW-0808">Transferase</keyword>
<keyword id="KW-0812">Transmembrane</keyword>
<keyword id="KW-1133">Transmembrane helix</keyword>
<feature type="chain" id="PRO_0000345998" description="Protoheme IX farnesyltransferase">
    <location>
        <begin position="1"/>
        <end position="296"/>
    </location>
</feature>
<feature type="topological domain" description="Cytoplasmic" evidence="1">
    <location>
        <begin position="1"/>
        <end position="9"/>
    </location>
</feature>
<feature type="transmembrane region" description="Helical" evidence="1">
    <location>
        <begin position="10"/>
        <end position="28"/>
    </location>
</feature>
<feature type="topological domain" description="Periplasmic" evidence="1">
    <location>
        <begin position="29"/>
        <end position="37"/>
    </location>
</feature>
<feature type="transmembrane region" description="Helical" evidence="1">
    <location>
        <begin position="38"/>
        <end position="56"/>
    </location>
</feature>
<feature type="topological domain" description="Cytoplasmic" evidence="1">
    <location>
        <begin position="57"/>
        <end position="78"/>
    </location>
</feature>
<feature type="transmembrane region" description="Helical" evidence="1">
    <location>
        <begin position="79"/>
        <end position="97"/>
    </location>
</feature>
<feature type="topological domain" description="Periplasmic" evidence="1">
    <location>
        <begin position="98"/>
        <end position="107"/>
    </location>
</feature>
<feature type="transmembrane region" description="Helical" evidence="1">
    <location>
        <begin position="108"/>
        <end position="126"/>
    </location>
</feature>
<feature type="topological domain" description="Cytoplasmic" evidence="1">
    <location>
        <begin position="127"/>
        <end position="197"/>
    </location>
</feature>
<feature type="transmembrane region" description="Helical" evidence="1">
    <location>
        <begin position="198"/>
        <end position="216"/>
    </location>
</feature>
<feature type="topological domain" description="Periplasmic" evidence="1">
    <location>
        <begin position="217"/>
        <end position="228"/>
    </location>
</feature>
<feature type="transmembrane region" description="Helical" evidence="1">
    <location>
        <begin position="229"/>
        <end position="247"/>
    </location>
</feature>
<feature type="topological domain" description="Cytoplasmic" evidence="1">
    <location>
        <begin position="248"/>
        <end position="268"/>
    </location>
</feature>
<feature type="transmembrane region" description="Helical" evidence="1">
    <location>
        <begin position="269"/>
        <end position="287"/>
    </location>
</feature>
<feature type="topological domain" description="Periplasmic" evidence="1">
    <location>
        <begin position="288"/>
        <end position="296"/>
    </location>
</feature>
<organism>
    <name type="scientific">Escherichia coli O9:H4 (strain HS)</name>
    <dbReference type="NCBI Taxonomy" id="331112"/>
    <lineage>
        <taxon>Bacteria</taxon>
        <taxon>Pseudomonadati</taxon>
        <taxon>Pseudomonadota</taxon>
        <taxon>Gammaproteobacteria</taxon>
        <taxon>Enterobacterales</taxon>
        <taxon>Enterobacteriaceae</taxon>
        <taxon>Escherichia</taxon>
    </lineage>
</organism>
<dbReference type="EC" id="2.5.1.141" evidence="1"/>
<dbReference type="EMBL" id="CP000802">
    <property type="protein sequence ID" value="ABV04888.1"/>
    <property type="molecule type" value="Genomic_DNA"/>
</dbReference>
<dbReference type="RefSeq" id="WP_000971336.1">
    <property type="nucleotide sequence ID" value="NC_009800.1"/>
</dbReference>
<dbReference type="SMR" id="A7ZX84"/>
<dbReference type="GeneID" id="75202853"/>
<dbReference type="KEGG" id="ecx:EcHS_A0503"/>
<dbReference type="HOGENOM" id="CLU_029631_0_0_6"/>
<dbReference type="UniPathway" id="UPA00834">
    <property type="reaction ID" value="UER00712"/>
</dbReference>
<dbReference type="GO" id="GO:0005886">
    <property type="term" value="C:plasma membrane"/>
    <property type="evidence" value="ECO:0007669"/>
    <property type="project" value="UniProtKB-SubCell"/>
</dbReference>
<dbReference type="GO" id="GO:0008495">
    <property type="term" value="F:protoheme IX farnesyltransferase activity"/>
    <property type="evidence" value="ECO:0007669"/>
    <property type="project" value="UniProtKB-UniRule"/>
</dbReference>
<dbReference type="GO" id="GO:0048034">
    <property type="term" value="P:heme O biosynthetic process"/>
    <property type="evidence" value="ECO:0007669"/>
    <property type="project" value="UniProtKB-UniRule"/>
</dbReference>
<dbReference type="CDD" id="cd13957">
    <property type="entry name" value="PT_UbiA_Cox10"/>
    <property type="match status" value="1"/>
</dbReference>
<dbReference type="FunFam" id="1.10.357.140:FF:000001">
    <property type="entry name" value="Protoheme IX farnesyltransferase"/>
    <property type="match status" value="1"/>
</dbReference>
<dbReference type="Gene3D" id="1.10.357.140">
    <property type="entry name" value="UbiA prenyltransferase"/>
    <property type="match status" value="1"/>
</dbReference>
<dbReference type="HAMAP" id="MF_00154">
    <property type="entry name" value="CyoE_CtaB"/>
    <property type="match status" value="1"/>
</dbReference>
<dbReference type="InterPro" id="IPR006369">
    <property type="entry name" value="Protohaem_IX_farnesylTrfase"/>
</dbReference>
<dbReference type="InterPro" id="IPR000537">
    <property type="entry name" value="UbiA_prenyltransferase"/>
</dbReference>
<dbReference type="InterPro" id="IPR030470">
    <property type="entry name" value="UbiA_prenylTrfase_CS"/>
</dbReference>
<dbReference type="InterPro" id="IPR044878">
    <property type="entry name" value="UbiA_sf"/>
</dbReference>
<dbReference type="NCBIfam" id="TIGR01473">
    <property type="entry name" value="cyoE_ctaB"/>
    <property type="match status" value="1"/>
</dbReference>
<dbReference type="NCBIfam" id="NF003348">
    <property type="entry name" value="PRK04375.1-1"/>
    <property type="match status" value="1"/>
</dbReference>
<dbReference type="PANTHER" id="PTHR43448">
    <property type="entry name" value="PROTOHEME IX FARNESYLTRANSFERASE, MITOCHONDRIAL"/>
    <property type="match status" value="1"/>
</dbReference>
<dbReference type="PANTHER" id="PTHR43448:SF2">
    <property type="entry name" value="PROTOHEME IX FARNESYLTRANSFERASE, MITOCHONDRIAL"/>
    <property type="match status" value="1"/>
</dbReference>
<dbReference type="Pfam" id="PF01040">
    <property type="entry name" value="UbiA"/>
    <property type="match status" value="1"/>
</dbReference>
<dbReference type="PROSITE" id="PS00943">
    <property type="entry name" value="UBIA"/>
    <property type="match status" value="1"/>
</dbReference>
<accession>A7ZX84</accession>
<proteinExistence type="inferred from homology"/>
<reference key="1">
    <citation type="journal article" date="2008" name="J. Bacteriol.">
        <title>The pangenome structure of Escherichia coli: comparative genomic analysis of E. coli commensal and pathogenic isolates.</title>
        <authorList>
            <person name="Rasko D.A."/>
            <person name="Rosovitz M.J."/>
            <person name="Myers G.S.A."/>
            <person name="Mongodin E.F."/>
            <person name="Fricke W.F."/>
            <person name="Gajer P."/>
            <person name="Crabtree J."/>
            <person name="Sebaihia M."/>
            <person name="Thomson N.R."/>
            <person name="Chaudhuri R."/>
            <person name="Henderson I.R."/>
            <person name="Sperandio V."/>
            <person name="Ravel J."/>
        </authorList>
    </citation>
    <scope>NUCLEOTIDE SEQUENCE [LARGE SCALE GENOMIC DNA]</scope>
    <source>
        <strain>HS</strain>
    </source>
</reference>
<evidence type="ECO:0000255" key="1">
    <source>
        <dbReference type="HAMAP-Rule" id="MF_00154"/>
    </source>
</evidence>
<comment type="function">
    <text evidence="1">Converts heme B (protoheme IX) to heme O by substitution of the vinyl group on carbon 2 of heme B porphyrin ring with a hydroxyethyl farnesyl side group.</text>
</comment>
<comment type="catalytic activity">
    <reaction evidence="1">
        <text>heme b + (2E,6E)-farnesyl diphosphate + H2O = Fe(II)-heme o + diphosphate</text>
        <dbReference type="Rhea" id="RHEA:28070"/>
        <dbReference type="ChEBI" id="CHEBI:15377"/>
        <dbReference type="ChEBI" id="CHEBI:33019"/>
        <dbReference type="ChEBI" id="CHEBI:60344"/>
        <dbReference type="ChEBI" id="CHEBI:60530"/>
        <dbReference type="ChEBI" id="CHEBI:175763"/>
        <dbReference type="EC" id="2.5.1.141"/>
    </reaction>
</comment>
<comment type="pathway">
    <text evidence="1">Porphyrin-containing compound metabolism; heme O biosynthesis; heme O from protoheme: step 1/1.</text>
</comment>
<comment type="subcellular location">
    <subcellularLocation>
        <location evidence="1">Cell inner membrane</location>
        <topology evidence="1">Multi-pass membrane protein</topology>
    </subcellularLocation>
</comment>
<comment type="miscellaneous">
    <text evidence="1">Carbon 2 of the heme B porphyrin ring is defined according to the Fischer nomenclature.</text>
</comment>
<comment type="similarity">
    <text evidence="1">Belongs to the UbiA prenyltransferase family. Protoheme IX farnesyltransferase subfamily.</text>
</comment>
<sequence>MMFKQYLQVTKPGIIFGNLISVIGGFLLASKGSIDYPLFIYTLVGVSLVVASGCVFNNYIDRDIDRKMERTKNRVLVKGLISPAVSLVYATLLGIAGFMLLWFGANPLACWLGVMGFVVYVGVYSLYMKRHSVYGTLIGSLSGAAPPVIGYCAVTGEFDSGAAILLAIFSLWQMPHSYAIAIFRFKDYQAANIPVLPVVKGISVAKNHITLYIIAFAVATLMLSLGGYAGYKYLVVAAAVSVWWLGMALRGYKVADDRIWARKLFGFSIIAITALSVMMSVDFMVPDSHTLLAAVW</sequence>
<protein>
    <recommendedName>
        <fullName evidence="1">Protoheme IX farnesyltransferase</fullName>
        <ecNumber evidence="1">2.5.1.141</ecNumber>
    </recommendedName>
    <alternativeName>
        <fullName evidence="1">Heme B farnesyltransferase</fullName>
    </alternativeName>
    <alternativeName>
        <fullName evidence="1">Heme O synthase</fullName>
    </alternativeName>
</protein>
<gene>
    <name evidence="1" type="primary">cyoE</name>
    <name type="ordered locus">EcHS_A0503</name>
</gene>